<name>LGT_BUCAT</name>
<sequence>MYIFFPKLNPIIFTIGPVSARWYGFMYVISFLFAMWYGKKCSIKNKKIWYEKKIETLLYAIFLGSCIGGRIGYIIFYNFSYYSQNMLSVFYIWEGGMSFHGGLIGAIIVMSYFSFKYKKKILEISDFITPLIPFGLGAGRIGNFINSELWGRVSPNFSYAMIFPNSQNQDLKEIKKYPELQLLLDQYGALPRHPTQLYEFFLEGILLFFIIYFFSKKDRPTGSISGLFLIFYGLFRIFIEFFREPDPQIGLLKNIITMGQILSLPMIIAGLIIMYKSCYKK</sequence>
<accession>B8D7W9</accession>
<proteinExistence type="inferred from homology"/>
<gene>
    <name evidence="1" type="primary">lgt</name>
    <name type="ordered locus">BUAPTUC7_433</name>
</gene>
<comment type="function">
    <text evidence="1">Catalyzes the transfer of the diacylglyceryl group from phosphatidylglycerol to the sulfhydryl group of the N-terminal cysteine of a prolipoprotein, the first step in the formation of mature lipoproteins.</text>
</comment>
<comment type="catalytic activity">
    <reaction evidence="1">
        <text>L-cysteinyl-[prolipoprotein] + a 1,2-diacyl-sn-glycero-3-phospho-(1'-sn-glycerol) = an S-1,2-diacyl-sn-glyceryl-L-cysteinyl-[prolipoprotein] + sn-glycerol 1-phosphate + H(+)</text>
        <dbReference type="Rhea" id="RHEA:56712"/>
        <dbReference type="Rhea" id="RHEA-COMP:14679"/>
        <dbReference type="Rhea" id="RHEA-COMP:14680"/>
        <dbReference type="ChEBI" id="CHEBI:15378"/>
        <dbReference type="ChEBI" id="CHEBI:29950"/>
        <dbReference type="ChEBI" id="CHEBI:57685"/>
        <dbReference type="ChEBI" id="CHEBI:64716"/>
        <dbReference type="ChEBI" id="CHEBI:140658"/>
        <dbReference type="EC" id="2.5.1.145"/>
    </reaction>
</comment>
<comment type="pathway">
    <text evidence="1">Protein modification; lipoprotein biosynthesis (diacylglyceryl transfer).</text>
</comment>
<comment type="subcellular location">
    <subcellularLocation>
        <location evidence="1">Cell inner membrane</location>
        <topology evidence="1">Multi-pass membrane protein</topology>
    </subcellularLocation>
</comment>
<comment type="similarity">
    <text evidence="1">Belongs to the Lgt family.</text>
</comment>
<evidence type="ECO:0000255" key="1">
    <source>
        <dbReference type="HAMAP-Rule" id="MF_01147"/>
    </source>
</evidence>
<dbReference type="EC" id="2.5.1.145" evidence="1"/>
<dbReference type="EMBL" id="CP001158">
    <property type="protein sequence ID" value="ACL30234.1"/>
    <property type="molecule type" value="Genomic_DNA"/>
</dbReference>
<dbReference type="RefSeq" id="WP_012619548.1">
    <property type="nucleotide sequence ID" value="NC_011834.1"/>
</dbReference>
<dbReference type="SMR" id="B8D7W9"/>
<dbReference type="KEGG" id="bau:BUAPTUC7_433"/>
<dbReference type="HOGENOM" id="CLU_013386_1_0_6"/>
<dbReference type="UniPathway" id="UPA00664"/>
<dbReference type="GO" id="GO:0005886">
    <property type="term" value="C:plasma membrane"/>
    <property type="evidence" value="ECO:0007669"/>
    <property type="project" value="UniProtKB-SubCell"/>
</dbReference>
<dbReference type="GO" id="GO:0008961">
    <property type="term" value="F:phosphatidylglycerol-prolipoprotein diacylglyceryl transferase activity"/>
    <property type="evidence" value="ECO:0007669"/>
    <property type="project" value="UniProtKB-UniRule"/>
</dbReference>
<dbReference type="GO" id="GO:0042158">
    <property type="term" value="P:lipoprotein biosynthetic process"/>
    <property type="evidence" value="ECO:0007669"/>
    <property type="project" value="UniProtKB-UniRule"/>
</dbReference>
<dbReference type="HAMAP" id="MF_01147">
    <property type="entry name" value="Lgt"/>
    <property type="match status" value="1"/>
</dbReference>
<dbReference type="InterPro" id="IPR001640">
    <property type="entry name" value="Lgt"/>
</dbReference>
<dbReference type="NCBIfam" id="TIGR00544">
    <property type="entry name" value="lgt"/>
    <property type="match status" value="1"/>
</dbReference>
<dbReference type="PANTHER" id="PTHR30589:SF0">
    <property type="entry name" value="PHOSPHATIDYLGLYCEROL--PROLIPOPROTEIN DIACYLGLYCERYL TRANSFERASE"/>
    <property type="match status" value="1"/>
</dbReference>
<dbReference type="PANTHER" id="PTHR30589">
    <property type="entry name" value="PROLIPOPROTEIN DIACYLGLYCERYL TRANSFERASE"/>
    <property type="match status" value="1"/>
</dbReference>
<dbReference type="Pfam" id="PF01790">
    <property type="entry name" value="LGT"/>
    <property type="match status" value="1"/>
</dbReference>
<dbReference type="PROSITE" id="PS01311">
    <property type="entry name" value="LGT"/>
    <property type="match status" value="1"/>
</dbReference>
<feature type="chain" id="PRO_1000164129" description="Phosphatidylglycerol--prolipoprotein diacylglyceryl transferase">
    <location>
        <begin position="1"/>
        <end position="281"/>
    </location>
</feature>
<feature type="transmembrane region" description="Helical" evidence="1">
    <location>
        <begin position="11"/>
        <end position="31"/>
    </location>
</feature>
<feature type="transmembrane region" description="Helical" evidence="1">
    <location>
        <begin position="57"/>
        <end position="77"/>
    </location>
</feature>
<feature type="transmembrane region" description="Helical" evidence="1">
    <location>
        <begin position="89"/>
        <end position="109"/>
    </location>
</feature>
<feature type="transmembrane region" description="Helical" evidence="1">
    <location>
        <begin position="121"/>
        <end position="141"/>
    </location>
</feature>
<feature type="transmembrane region" description="Helical" evidence="1">
    <location>
        <begin position="194"/>
        <end position="214"/>
    </location>
</feature>
<feature type="transmembrane region" description="Helical" evidence="1">
    <location>
        <begin position="222"/>
        <end position="242"/>
    </location>
</feature>
<feature type="transmembrane region" description="Helical" evidence="1">
    <location>
        <begin position="255"/>
        <end position="275"/>
    </location>
</feature>
<feature type="binding site" evidence="1">
    <location>
        <position position="140"/>
    </location>
    <ligand>
        <name>a 1,2-diacyl-sn-glycero-3-phospho-(1'-sn-glycerol)</name>
        <dbReference type="ChEBI" id="CHEBI:64716"/>
    </ligand>
</feature>
<protein>
    <recommendedName>
        <fullName evidence="1">Phosphatidylglycerol--prolipoprotein diacylglyceryl transferase</fullName>
        <ecNumber evidence="1">2.5.1.145</ecNumber>
    </recommendedName>
</protein>
<organism>
    <name type="scientific">Buchnera aphidicola subsp. Acyrthosiphon pisum (strain Tuc7)</name>
    <dbReference type="NCBI Taxonomy" id="561501"/>
    <lineage>
        <taxon>Bacteria</taxon>
        <taxon>Pseudomonadati</taxon>
        <taxon>Pseudomonadota</taxon>
        <taxon>Gammaproteobacteria</taxon>
        <taxon>Enterobacterales</taxon>
        <taxon>Erwiniaceae</taxon>
        <taxon>Buchnera</taxon>
    </lineage>
</organism>
<reference key="1">
    <citation type="journal article" date="2009" name="Science">
        <title>The dynamics and time scale of ongoing genomic erosion in symbiotic bacteria.</title>
        <authorList>
            <person name="Moran N.A."/>
            <person name="McLaughlin H.J."/>
            <person name="Sorek R."/>
        </authorList>
    </citation>
    <scope>NUCLEOTIDE SEQUENCE [LARGE SCALE GENOMIC DNA]</scope>
    <source>
        <strain>Tuc7</strain>
    </source>
</reference>
<keyword id="KW-0997">Cell inner membrane</keyword>
<keyword id="KW-1003">Cell membrane</keyword>
<keyword id="KW-0472">Membrane</keyword>
<keyword id="KW-0808">Transferase</keyword>
<keyword id="KW-0812">Transmembrane</keyword>
<keyword id="KW-1133">Transmembrane helix</keyword>